<comment type="function">
    <text evidence="1">The UvrABC repair system catalyzes the recognition and processing of DNA lesions. A damage recognition complex composed of 2 UvrA and 2 UvrB subunits scans DNA for abnormalities. Upon binding of the UvrA(2)B(2) complex to a putative damaged site, the DNA wraps around one UvrB monomer. DNA wrap is dependent on ATP binding by UvrB and probably causes local melting of the DNA helix, facilitating insertion of UvrB beta-hairpin between the DNA strands. Then UvrB probes one DNA strand for the presence of a lesion. If a lesion is found the UvrA subunits dissociate and the UvrB-DNA preincision complex is formed. This complex is subsequently bound by UvrC and the second UvrB is released. If no lesion is found, the DNA wraps around the other UvrB subunit that will check the other stand for damage.</text>
</comment>
<comment type="subunit">
    <text evidence="1">Forms a heterotetramer with UvrA during the search for lesions. Interacts with UvrC in an incision complex.</text>
</comment>
<comment type="subcellular location">
    <subcellularLocation>
        <location evidence="1">Cytoplasm</location>
    </subcellularLocation>
</comment>
<comment type="domain">
    <text evidence="1">The beta-hairpin motif is involved in DNA binding.</text>
</comment>
<comment type="similarity">
    <text evidence="1">Belongs to the UvrB family.</text>
</comment>
<name>UVRB_METMA</name>
<protein>
    <recommendedName>
        <fullName evidence="1">UvrABC system protein B</fullName>
        <shortName evidence="1">Protein UvrB</shortName>
    </recommendedName>
    <alternativeName>
        <fullName evidence="1">Excinuclease ABC subunit B</fullName>
    </alternativeName>
</protein>
<accession>Q8PRZ9</accession>
<reference key="1">
    <citation type="journal article" date="2002" name="J. Mol. Microbiol. Biotechnol.">
        <title>The genome of Methanosarcina mazei: evidence for lateral gene transfer between Bacteria and Archaea.</title>
        <authorList>
            <person name="Deppenmeier U."/>
            <person name="Johann A."/>
            <person name="Hartsch T."/>
            <person name="Merkl R."/>
            <person name="Schmitz R.A."/>
            <person name="Martinez-Arias R."/>
            <person name="Henne A."/>
            <person name="Wiezer A."/>
            <person name="Baeumer S."/>
            <person name="Jacobi C."/>
            <person name="Brueggemann H."/>
            <person name="Lienard T."/>
            <person name="Christmann A."/>
            <person name="Boemecke M."/>
            <person name="Steckel S."/>
            <person name="Bhattacharyya A."/>
            <person name="Lykidis A."/>
            <person name="Overbeek R."/>
            <person name="Klenk H.-P."/>
            <person name="Gunsalus R.P."/>
            <person name="Fritz H.-J."/>
            <person name="Gottschalk G."/>
        </authorList>
    </citation>
    <scope>NUCLEOTIDE SEQUENCE [LARGE SCALE GENOMIC DNA]</scope>
    <source>
        <strain>ATCC BAA-159 / DSM 3647 / Goe1 / Go1 / JCM 11833 / OCM 88</strain>
    </source>
</reference>
<dbReference type="EMBL" id="AE008384">
    <property type="protein sequence ID" value="AAM32985.1"/>
    <property type="molecule type" value="Genomic_DNA"/>
</dbReference>
<dbReference type="RefSeq" id="WP_011035178.1">
    <property type="nucleotide sequence ID" value="NC_003901.1"/>
</dbReference>
<dbReference type="SMR" id="Q8PRZ9"/>
<dbReference type="GeneID" id="82162392"/>
<dbReference type="KEGG" id="mma:MM_3289"/>
<dbReference type="PATRIC" id="fig|192952.21.peg.3821"/>
<dbReference type="eggNOG" id="arCOG04748">
    <property type="taxonomic scope" value="Archaea"/>
</dbReference>
<dbReference type="HOGENOM" id="CLU_009621_2_1_2"/>
<dbReference type="Proteomes" id="UP000000595">
    <property type="component" value="Chromosome"/>
</dbReference>
<dbReference type="GO" id="GO:0005737">
    <property type="term" value="C:cytoplasm"/>
    <property type="evidence" value="ECO:0007669"/>
    <property type="project" value="UniProtKB-SubCell"/>
</dbReference>
<dbReference type="GO" id="GO:0009380">
    <property type="term" value="C:excinuclease repair complex"/>
    <property type="evidence" value="ECO:0007669"/>
    <property type="project" value="InterPro"/>
</dbReference>
<dbReference type="GO" id="GO:0005524">
    <property type="term" value="F:ATP binding"/>
    <property type="evidence" value="ECO:0007669"/>
    <property type="project" value="UniProtKB-UniRule"/>
</dbReference>
<dbReference type="GO" id="GO:0016887">
    <property type="term" value="F:ATP hydrolysis activity"/>
    <property type="evidence" value="ECO:0007669"/>
    <property type="project" value="InterPro"/>
</dbReference>
<dbReference type="GO" id="GO:0003677">
    <property type="term" value="F:DNA binding"/>
    <property type="evidence" value="ECO:0007669"/>
    <property type="project" value="UniProtKB-UniRule"/>
</dbReference>
<dbReference type="GO" id="GO:0009381">
    <property type="term" value="F:excinuclease ABC activity"/>
    <property type="evidence" value="ECO:0007669"/>
    <property type="project" value="UniProtKB-UniRule"/>
</dbReference>
<dbReference type="GO" id="GO:0006289">
    <property type="term" value="P:nucleotide-excision repair"/>
    <property type="evidence" value="ECO:0007669"/>
    <property type="project" value="UniProtKB-UniRule"/>
</dbReference>
<dbReference type="GO" id="GO:0009432">
    <property type="term" value="P:SOS response"/>
    <property type="evidence" value="ECO:0007669"/>
    <property type="project" value="UniProtKB-UniRule"/>
</dbReference>
<dbReference type="CDD" id="cd17916">
    <property type="entry name" value="DEXHc_UvrB"/>
    <property type="match status" value="1"/>
</dbReference>
<dbReference type="CDD" id="cd18790">
    <property type="entry name" value="SF2_C_UvrB"/>
    <property type="match status" value="1"/>
</dbReference>
<dbReference type="Gene3D" id="3.40.50.300">
    <property type="entry name" value="P-loop containing nucleotide triphosphate hydrolases"/>
    <property type="match status" value="3"/>
</dbReference>
<dbReference type="Gene3D" id="4.10.860.10">
    <property type="entry name" value="UVR domain"/>
    <property type="match status" value="1"/>
</dbReference>
<dbReference type="HAMAP" id="MF_00204">
    <property type="entry name" value="UvrB"/>
    <property type="match status" value="1"/>
</dbReference>
<dbReference type="InterPro" id="IPR006935">
    <property type="entry name" value="Helicase/UvrB_N"/>
</dbReference>
<dbReference type="InterPro" id="IPR014001">
    <property type="entry name" value="Helicase_ATP-bd"/>
</dbReference>
<dbReference type="InterPro" id="IPR001650">
    <property type="entry name" value="Helicase_C-like"/>
</dbReference>
<dbReference type="InterPro" id="IPR027417">
    <property type="entry name" value="P-loop_NTPase"/>
</dbReference>
<dbReference type="InterPro" id="IPR001943">
    <property type="entry name" value="UVR_dom"/>
</dbReference>
<dbReference type="InterPro" id="IPR036876">
    <property type="entry name" value="UVR_dom_sf"/>
</dbReference>
<dbReference type="InterPro" id="IPR004807">
    <property type="entry name" value="UvrB"/>
</dbReference>
<dbReference type="InterPro" id="IPR041471">
    <property type="entry name" value="UvrB_inter"/>
</dbReference>
<dbReference type="InterPro" id="IPR024759">
    <property type="entry name" value="UvrB_YAD/RRR_dom"/>
</dbReference>
<dbReference type="NCBIfam" id="NF003673">
    <property type="entry name" value="PRK05298.1"/>
    <property type="match status" value="1"/>
</dbReference>
<dbReference type="NCBIfam" id="TIGR00631">
    <property type="entry name" value="uvrb"/>
    <property type="match status" value="1"/>
</dbReference>
<dbReference type="PANTHER" id="PTHR24029">
    <property type="entry name" value="UVRABC SYSTEM PROTEIN B"/>
    <property type="match status" value="1"/>
</dbReference>
<dbReference type="PANTHER" id="PTHR24029:SF0">
    <property type="entry name" value="UVRABC SYSTEM PROTEIN B"/>
    <property type="match status" value="1"/>
</dbReference>
<dbReference type="Pfam" id="PF00271">
    <property type="entry name" value="Helicase_C"/>
    <property type="match status" value="1"/>
</dbReference>
<dbReference type="Pfam" id="PF04851">
    <property type="entry name" value="ResIII"/>
    <property type="match status" value="1"/>
</dbReference>
<dbReference type="Pfam" id="PF02151">
    <property type="entry name" value="UVR"/>
    <property type="match status" value="1"/>
</dbReference>
<dbReference type="Pfam" id="PF12344">
    <property type="entry name" value="UvrB"/>
    <property type="match status" value="1"/>
</dbReference>
<dbReference type="Pfam" id="PF17757">
    <property type="entry name" value="UvrB_inter"/>
    <property type="match status" value="1"/>
</dbReference>
<dbReference type="SMART" id="SM00487">
    <property type="entry name" value="DEXDc"/>
    <property type="match status" value="1"/>
</dbReference>
<dbReference type="SMART" id="SM00490">
    <property type="entry name" value="HELICc"/>
    <property type="match status" value="1"/>
</dbReference>
<dbReference type="SUPFAM" id="SSF46600">
    <property type="entry name" value="C-terminal UvrC-binding domain of UvrB"/>
    <property type="match status" value="1"/>
</dbReference>
<dbReference type="SUPFAM" id="SSF52540">
    <property type="entry name" value="P-loop containing nucleoside triphosphate hydrolases"/>
    <property type="match status" value="2"/>
</dbReference>
<dbReference type="PROSITE" id="PS51192">
    <property type="entry name" value="HELICASE_ATP_BIND_1"/>
    <property type="match status" value="1"/>
</dbReference>
<dbReference type="PROSITE" id="PS51194">
    <property type="entry name" value="HELICASE_CTER"/>
    <property type="match status" value="1"/>
</dbReference>
<dbReference type="PROSITE" id="PS50151">
    <property type="entry name" value="UVR"/>
    <property type="match status" value="1"/>
</dbReference>
<organism>
    <name type="scientific">Methanosarcina mazei (strain ATCC BAA-159 / DSM 3647 / Goe1 / Go1 / JCM 11833 / OCM 88)</name>
    <name type="common">Methanosarcina frisia</name>
    <dbReference type="NCBI Taxonomy" id="192952"/>
    <lineage>
        <taxon>Archaea</taxon>
        <taxon>Methanobacteriati</taxon>
        <taxon>Methanobacteriota</taxon>
        <taxon>Stenosarchaea group</taxon>
        <taxon>Methanomicrobia</taxon>
        <taxon>Methanosarcinales</taxon>
        <taxon>Methanosarcinaceae</taxon>
        <taxon>Methanosarcina</taxon>
    </lineage>
</organism>
<gene>
    <name evidence="1" type="primary">uvrB</name>
    <name type="ordered locus">MM_3289</name>
</gene>
<keyword id="KW-0067">ATP-binding</keyword>
<keyword id="KW-0963">Cytoplasm</keyword>
<keyword id="KW-0227">DNA damage</keyword>
<keyword id="KW-0228">DNA excision</keyword>
<keyword id="KW-0234">DNA repair</keyword>
<keyword id="KW-0267">Excision nuclease</keyword>
<keyword id="KW-0547">Nucleotide-binding</keyword>
<keyword id="KW-0742">SOS response</keyword>
<evidence type="ECO:0000255" key="1">
    <source>
        <dbReference type="HAMAP-Rule" id="MF_00204"/>
    </source>
</evidence>
<sequence length="670" mass="77691">MKVSSQTTGELAENKFETIYDERYWESPPFKLVSDFEPKGSQPEAIEKLVDGLKKGEPFQTLLGVTGSGKTYTVANVINQIRKPTLVIAHNKTLAAQLYNEFREFFPENRVEYFVSYYDYYQPESYLPAKDQYIEKDAMINPKIEQMRLAATASLMSRQDVIVVASVSCIYGLGNPENFQKMGFELKVGDKVHRKEILEKLIDIQFERNDLELMPGRFRVKGDTIDIIPGYFDDIIRIELFGDEVDRISEVDKQTGQRKEDMDYFFVYPARHYVIPEEEQKSAIQFILEELEERLPELGLLESHRLKQRTLYDMEMIQETGSCKGIENYSRHFDHRQPGEKPFCLLDYFPDDFLLVIDESHQTIPQLHGMYNGDRSRKKSLVDYGFRLPSAFDNRPLKFEEFEKYMKNVIFVSATPADYEREHSSRVVEQIIRPTGLVDPEVEVRPLEGQVRDVMQEIRKIVERGDRALVTTLTKKLAEELTEFLAKNEIKARYLHSDIKTIERTEIIRELRLGKFDVLVGINLLREGLDIPEVGFIGILDADKEGFLRNSKSLIQIIGRAARNSSSRVVLYADNMTDSIKSAVQETERRRSMQIAYNEEHGIVPTTIRKPIREKVVDITDTKHIPKTDIPNVIIELDAEMREAADRLDFERAIQVRELIKKLEKEIKAV</sequence>
<proteinExistence type="inferred from homology"/>
<feature type="chain" id="PRO_0000138455" description="UvrABC system protein B">
    <location>
        <begin position="1"/>
        <end position="670"/>
    </location>
</feature>
<feature type="domain" description="Helicase ATP-binding" evidence="1">
    <location>
        <begin position="51"/>
        <end position="433"/>
    </location>
</feature>
<feature type="domain" description="Helicase C-terminal" evidence="1">
    <location>
        <begin position="453"/>
        <end position="612"/>
    </location>
</feature>
<feature type="domain" description="UVR" evidence="1">
    <location>
        <begin position="631"/>
        <end position="666"/>
    </location>
</feature>
<feature type="short sequence motif" description="Beta-hairpin">
    <location>
        <begin position="117"/>
        <end position="140"/>
    </location>
</feature>
<feature type="binding site" evidence="1">
    <location>
        <begin position="64"/>
        <end position="71"/>
    </location>
    <ligand>
        <name>ATP</name>
        <dbReference type="ChEBI" id="CHEBI:30616"/>
    </ligand>
</feature>